<proteinExistence type="inferred from homology"/>
<evidence type="ECO:0000255" key="1">
    <source>
        <dbReference type="HAMAP-Rule" id="MF_01848"/>
    </source>
</evidence>
<evidence type="ECO:0000256" key="2">
    <source>
        <dbReference type="SAM" id="MobiDB-lite"/>
    </source>
</evidence>
<evidence type="ECO:0000305" key="3"/>
<sequence>MPRPSSPRPDAERKSASPLHPRNRHLGRYDFPGLIAGNPELERFVIVNPYGKPSIDFADPLAVKAFNRALLQQFYDVREWNIPEGYLCPPIPGRADYLHYLADLLGASHDGVIPRGTGLRALDVGTGANCIYPLLGHHEYGWRFVGADIDPQSLASAAAILAANPRFAAAIELRRQPDRRHIFEGLVDSAERFDMTLCNPPFHASLDEATRGSRRKWKNLGKLDPGRTLPLLNFGGQGAELHCEGGEAAFLASMAGESRAFATQVFWFTTLVSKASNLPNLQERLKTLGASDIRVVDMAQGQKQSRFVAWTYLDKKQRRAWRRERWSAAVPLGE</sequence>
<gene>
    <name evidence="1" type="primary">rlmF</name>
    <name type="ordered locus">PSPA7_1273</name>
</gene>
<organism>
    <name type="scientific">Pseudomonas paraeruginosa (strain DSM 24068 / PA7)</name>
    <name type="common">Pseudomonas aeruginosa (strain PA7)</name>
    <dbReference type="NCBI Taxonomy" id="381754"/>
    <lineage>
        <taxon>Bacteria</taxon>
        <taxon>Pseudomonadati</taxon>
        <taxon>Pseudomonadota</taxon>
        <taxon>Gammaproteobacteria</taxon>
        <taxon>Pseudomonadales</taxon>
        <taxon>Pseudomonadaceae</taxon>
        <taxon>Pseudomonas</taxon>
        <taxon>Pseudomonas paraeruginosa</taxon>
    </lineage>
</organism>
<comment type="function">
    <text evidence="1">Specifically methylates the adenine in position 1618 of 23S rRNA.</text>
</comment>
<comment type="catalytic activity">
    <reaction evidence="1">
        <text>adenosine(1618) in 23S rRNA + S-adenosyl-L-methionine = N(6)-methyladenosine(1618) in 23S rRNA + S-adenosyl-L-homocysteine + H(+)</text>
        <dbReference type="Rhea" id="RHEA:16497"/>
        <dbReference type="Rhea" id="RHEA-COMP:10229"/>
        <dbReference type="Rhea" id="RHEA-COMP:10231"/>
        <dbReference type="ChEBI" id="CHEBI:15378"/>
        <dbReference type="ChEBI" id="CHEBI:57856"/>
        <dbReference type="ChEBI" id="CHEBI:59789"/>
        <dbReference type="ChEBI" id="CHEBI:74411"/>
        <dbReference type="ChEBI" id="CHEBI:74449"/>
        <dbReference type="EC" id="2.1.1.181"/>
    </reaction>
</comment>
<comment type="subcellular location">
    <subcellularLocation>
        <location evidence="1">Cytoplasm</location>
    </subcellularLocation>
</comment>
<comment type="similarity">
    <text evidence="1">Belongs to the methyltransferase superfamily. METTL16/RlmF family.</text>
</comment>
<comment type="sequence caution" evidence="3">
    <conflict type="erroneous initiation">
        <sequence resource="EMBL-CDS" id="ABR83732"/>
    </conflict>
</comment>
<accession>A6V0S3</accession>
<protein>
    <recommendedName>
        <fullName evidence="1">Ribosomal RNA large subunit methyltransferase F</fullName>
        <ecNumber evidence="1">2.1.1.181</ecNumber>
    </recommendedName>
    <alternativeName>
        <fullName evidence="1">23S rRNA mA1618 methyltransferase</fullName>
    </alternativeName>
    <alternativeName>
        <fullName evidence="1">rRNA adenine N-6-methyltransferase</fullName>
    </alternativeName>
</protein>
<reference key="1">
    <citation type="submission" date="2007-06" db="EMBL/GenBank/DDBJ databases">
        <authorList>
            <person name="Dodson R.J."/>
            <person name="Harkins D."/>
            <person name="Paulsen I.T."/>
        </authorList>
    </citation>
    <scope>NUCLEOTIDE SEQUENCE [LARGE SCALE GENOMIC DNA]</scope>
    <source>
        <strain>DSM 24068 / PA7</strain>
    </source>
</reference>
<dbReference type="EC" id="2.1.1.181" evidence="1"/>
<dbReference type="EMBL" id="CP000744">
    <property type="protein sequence ID" value="ABR83732.1"/>
    <property type="status" value="ALT_INIT"/>
    <property type="molecule type" value="Genomic_DNA"/>
</dbReference>
<dbReference type="RefSeq" id="WP_041025455.1">
    <property type="nucleotide sequence ID" value="NC_009656.1"/>
</dbReference>
<dbReference type="SMR" id="A6V0S3"/>
<dbReference type="KEGG" id="pap:PSPA7_1273"/>
<dbReference type="HOGENOM" id="CLU_027534_3_0_6"/>
<dbReference type="Proteomes" id="UP000001582">
    <property type="component" value="Chromosome"/>
</dbReference>
<dbReference type="GO" id="GO:0005737">
    <property type="term" value="C:cytoplasm"/>
    <property type="evidence" value="ECO:0007669"/>
    <property type="project" value="UniProtKB-SubCell"/>
</dbReference>
<dbReference type="GO" id="GO:0052907">
    <property type="term" value="F:23S rRNA (adenine(1618)-N(6))-methyltransferase activity"/>
    <property type="evidence" value="ECO:0007669"/>
    <property type="project" value="UniProtKB-EC"/>
</dbReference>
<dbReference type="GO" id="GO:0070475">
    <property type="term" value="P:rRNA base methylation"/>
    <property type="evidence" value="ECO:0007669"/>
    <property type="project" value="TreeGrafter"/>
</dbReference>
<dbReference type="CDD" id="cd02440">
    <property type="entry name" value="AdoMet_MTases"/>
    <property type="match status" value="1"/>
</dbReference>
<dbReference type="FunFam" id="3.40.50.150:FF:000045">
    <property type="entry name" value="Ribosomal RNA large subunit methyltransferase F"/>
    <property type="match status" value="1"/>
</dbReference>
<dbReference type="Gene3D" id="3.40.50.150">
    <property type="entry name" value="Vaccinia Virus protein VP39"/>
    <property type="match status" value="1"/>
</dbReference>
<dbReference type="HAMAP" id="MF_01848">
    <property type="entry name" value="23SrRNA_methyltr_F"/>
    <property type="match status" value="1"/>
</dbReference>
<dbReference type="InterPro" id="IPR010286">
    <property type="entry name" value="METTL16/RlmF"/>
</dbReference>
<dbReference type="InterPro" id="IPR016909">
    <property type="entry name" value="rRNA_lsu_MeTfrase_F"/>
</dbReference>
<dbReference type="InterPro" id="IPR029063">
    <property type="entry name" value="SAM-dependent_MTases_sf"/>
</dbReference>
<dbReference type="NCBIfam" id="NF008725">
    <property type="entry name" value="PRK11727.1"/>
    <property type="match status" value="1"/>
</dbReference>
<dbReference type="PANTHER" id="PTHR13393:SF0">
    <property type="entry name" value="RNA N6-ADENOSINE-METHYLTRANSFERASE METTL16"/>
    <property type="match status" value="1"/>
</dbReference>
<dbReference type="PANTHER" id="PTHR13393">
    <property type="entry name" value="SAM-DEPENDENT METHYLTRANSFERASE"/>
    <property type="match status" value="1"/>
</dbReference>
<dbReference type="Pfam" id="PF05971">
    <property type="entry name" value="Methyltransf_10"/>
    <property type="match status" value="1"/>
</dbReference>
<dbReference type="PIRSF" id="PIRSF029038">
    <property type="entry name" value="Mtase_YbiN_prd"/>
    <property type="match status" value="1"/>
</dbReference>
<dbReference type="SUPFAM" id="SSF53335">
    <property type="entry name" value="S-adenosyl-L-methionine-dependent methyltransferases"/>
    <property type="match status" value="1"/>
</dbReference>
<keyword id="KW-0963">Cytoplasm</keyword>
<keyword id="KW-0489">Methyltransferase</keyword>
<keyword id="KW-0698">rRNA processing</keyword>
<keyword id="KW-0949">S-adenosyl-L-methionine</keyword>
<keyword id="KW-0808">Transferase</keyword>
<name>RLMF_PSEP7</name>
<feature type="chain" id="PRO_0000349926" description="Ribosomal RNA large subunit methyltransferase F">
    <location>
        <begin position="1"/>
        <end position="334"/>
    </location>
</feature>
<feature type="region of interest" description="Disordered" evidence="2">
    <location>
        <begin position="1"/>
        <end position="25"/>
    </location>
</feature>